<comment type="function">
    <text evidence="2">Catalyzes both the ATP-dependent activation of exogenously supplied lipoate to lipoyl-AMP and the transfer of the activated lipoyl onto the lipoyl domains of lipoate-dependent enzymes.</text>
</comment>
<comment type="catalytic activity">
    <reaction evidence="2">
        <text>L-lysyl-[lipoyl-carrier protein] + (R)-lipoate + ATP = N(6)-[(R)-lipoyl]-L-lysyl-[lipoyl-carrier protein] + AMP + diphosphate + H(+)</text>
        <dbReference type="Rhea" id="RHEA:49288"/>
        <dbReference type="Rhea" id="RHEA-COMP:10500"/>
        <dbReference type="Rhea" id="RHEA-COMP:10502"/>
        <dbReference type="ChEBI" id="CHEBI:15378"/>
        <dbReference type="ChEBI" id="CHEBI:29969"/>
        <dbReference type="ChEBI" id="CHEBI:30616"/>
        <dbReference type="ChEBI" id="CHEBI:33019"/>
        <dbReference type="ChEBI" id="CHEBI:83088"/>
        <dbReference type="ChEBI" id="CHEBI:83099"/>
        <dbReference type="ChEBI" id="CHEBI:456215"/>
        <dbReference type="EC" id="6.3.1.20"/>
    </reaction>
</comment>
<comment type="pathway">
    <text evidence="2">Protein modification; protein lipoylation via exogenous pathway; protein N(6)-(lipoyl)lysine from lipoate: step 1/2.</text>
</comment>
<comment type="pathway">
    <text evidence="2">Protein modification; protein lipoylation via exogenous pathway; protein N(6)-(lipoyl)lysine from lipoate: step 2/2.</text>
</comment>
<comment type="subunit">
    <text evidence="2">Monomer.</text>
</comment>
<comment type="subcellular location">
    <subcellularLocation>
        <location evidence="2">Cytoplasm</location>
    </subcellularLocation>
</comment>
<comment type="miscellaneous">
    <text evidence="2">In the transfer reaction, the free carboxyl group of lipoic acid is attached via an amide linkage to the epsilon-amino group of a specific lysine residue of lipoyl domains of lipoate-dependent enzymes.</text>
</comment>
<comment type="similarity">
    <text evidence="2">Belongs to the LplA family.</text>
</comment>
<comment type="sequence caution" evidence="4">
    <conflict type="miscellaneous discrepancy">
        <sequence resource="EMBL-CDS" id="AAG59567"/>
    </conflict>
    <text>A missing stop codon produces one ORF that contains smp and lplA.</text>
</comment>
<comment type="sequence caution" evidence="4">
    <conflict type="miscellaneous discrepancy">
        <sequence resource="EMBL-CDS" id="BAB38768"/>
    </conflict>
    <text>A missing stop codon produces one ORF that contains smp and lplA.</text>
</comment>
<protein>
    <recommendedName>
        <fullName evidence="2">Lipoate-protein ligase A</fullName>
        <ecNumber evidence="2">6.3.1.20</ecNumber>
    </recommendedName>
    <alternativeName>
        <fullName evidence="2">Lipoate--protein ligase</fullName>
    </alternativeName>
</protein>
<gene>
    <name evidence="2" type="primary">lplA</name>
    <name type="ordered locus">Z5988.2</name>
    <name type="ordered locus">ECs5345.2</name>
</gene>
<keyword id="KW-0067">ATP-binding</keyword>
<keyword id="KW-0963">Cytoplasm</keyword>
<keyword id="KW-0436">Ligase</keyword>
<keyword id="KW-0547">Nucleotide-binding</keyword>
<keyword id="KW-1185">Reference proteome</keyword>
<proteinExistence type="inferred from homology"/>
<accession>P60776</accession>
<accession>Q8XB31</accession>
<name>LPLA_ECO57</name>
<organism>
    <name type="scientific">Escherichia coli O157:H7</name>
    <dbReference type="NCBI Taxonomy" id="83334"/>
    <lineage>
        <taxon>Bacteria</taxon>
        <taxon>Pseudomonadati</taxon>
        <taxon>Pseudomonadota</taxon>
        <taxon>Gammaproteobacteria</taxon>
        <taxon>Enterobacterales</taxon>
        <taxon>Enterobacteriaceae</taxon>
        <taxon>Escherichia</taxon>
    </lineage>
</organism>
<sequence>MSTLRLLISDSYDPWFNLAVEECIFRQMPATQRVLFLWRNADTVVIGRAQNPWKECNTRRMEEDNVRLARRSSGGGAVFHDLGNTCFTFMAGKPEYDKTISTSIVLNALNALGVSAEASGRNDLVVKTAEGDRKVSGSAYRETKDRGFHHGTLLLNADLSRLANYLNPDKKKLAAKGITSVRSRVTNLTELLPGIPHEQVCEAITEAFFAHYGERVEAEIISPDKTPDLPNFAETFARQSSWEWNFGQAPAFSHLLDERFSWGGVELHFDVEKGHITRAQVFTDSLNPAPLEALAGRLQGCLYRADMLQQECEALLVDFPDQEKELRELSTWIAGAVR</sequence>
<dbReference type="EC" id="6.3.1.20" evidence="2"/>
<dbReference type="EMBL" id="AE005174">
    <property type="protein sequence ID" value="AAG59567.1"/>
    <property type="status" value="ALT_SEQ"/>
    <property type="molecule type" value="Genomic_DNA"/>
</dbReference>
<dbReference type="EMBL" id="BA000007">
    <property type="protein sequence ID" value="BAB38768.1"/>
    <property type="status" value="ALT_SEQ"/>
    <property type="molecule type" value="Genomic_DNA"/>
</dbReference>
<dbReference type="PIR" id="A98297">
    <property type="entry name" value="A98297"/>
</dbReference>
<dbReference type="PIR" id="C86138">
    <property type="entry name" value="C86138"/>
</dbReference>
<dbReference type="RefSeq" id="WP_000105832.1">
    <property type="nucleotide sequence ID" value="NZ_VOAI01000002.1"/>
</dbReference>
<dbReference type="SMR" id="P60776"/>
<dbReference type="STRING" id="155864.Z5988"/>
<dbReference type="KEGG" id="ece:Z5988"/>
<dbReference type="PATRIC" id="fig|83334.175.peg.118"/>
<dbReference type="eggNOG" id="COG0095">
    <property type="taxonomic scope" value="Bacteria"/>
</dbReference>
<dbReference type="eggNOG" id="COG3726">
    <property type="taxonomic scope" value="Bacteria"/>
</dbReference>
<dbReference type="HOGENOM" id="CLU_484629_0_0_6"/>
<dbReference type="UniPathway" id="UPA00537">
    <property type="reaction ID" value="UER00594"/>
</dbReference>
<dbReference type="UniPathway" id="UPA00537">
    <property type="reaction ID" value="UER00595"/>
</dbReference>
<dbReference type="Proteomes" id="UP000000558">
    <property type="component" value="Chromosome"/>
</dbReference>
<dbReference type="Proteomes" id="UP000002519">
    <property type="component" value="Chromosome"/>
</dbReference>
<dbReference type="GO" id="GO:0005829">
    <property type="term" value="C:cytosol"/>
    <property type="evidence" value="ECO:0007669"/>
    <property type="project" value="TreeGrafter"/>
</dbReference>
<dbReference type="GO" id="GO:0005524">
    <property type="term" value="F:ATP binding"/>
    <property type="evidence" value="ECO:0007669"/>
    <property type="project" value="UniProtKB-KW"/>
</dbReference>
<dbReference type="GO" id="GO:0016979">
    <property type="term" value="F:lipoate-protein ligase activity"/>
    <property type="evidence" value="ECO:0007669"/>
    <property type="project" value="UniProtKB-UniRule"/>
</dbReference>
<dbReference type="GO" id="GO:0017118">
    <property type="term" value="F:lipoyltransferase activity"/>
    <property type="evidence" value="ECO:0007669"/>
    <property type="project" value="TreeGrafter"/>
</dbReference>
<dbReference type="GO" id="GO:0036211">
    <property type="term" value="P:protein modification process"/>
    <property type="evidence" value="ECO:0007669"/>
    <property type="project" value="InterPro"/>
</dbReference>
<dbReference type="CDD" id="cd16435">
    <property type="entry name" value="BPL_LplA_LipB"/>
    <property type="match status" value="1"/>
</dbReference>
<dbReference type="FunFam" id="3.30.390.50:FF:000002">
    <property type="entry name" value="Lipoate-protein ligase A"/>
    <property type="match status" value="1"/>
</dbReference>
<dbReference type="FunFam" id="3.30.930.10:FF:000024">
    <property type="entry name" value="Lipoate-protein ligase A"/>
    <property type="match status" value="1"/>
</dbReference>
<dbReference type="Gene3D" id="3.30.930.10">
    <property type="entry name" value="Bira Bifunctional Protein, Domain 2"/>
    <property type="match status" value="1"/>
</dbReference>
<dbReference type="Gene3D" id="3.30.390.50">
    <property type="entry name" value="CO dehydrogenase flavoprotein, C-terminal domain"/>
    <property type="match status" value="1"/>
</dbReference>
<dbReference type="HAMAP" id="MF_01602">
    <property type="entry name" value="LplA"/>
    <property type="match status" value="1"/>
</dbReference>
<dbReference type="InterPro" id="IPR045864">
    <property type="entry name" value="aa-tRNA-synth_II/BPL/LPL"/>
</dbReference>
<dbReference type="InterPro" id="IPR004143">
    <property type="entry name" value="BPL_LPL_catalytic"/>
</dbReference>
<dbReference type="InterPro" id="IPR023741">
    <property type="entry name" value="Lipoate_ligase_A"/>
</dbReference>
<dbReference type="InterPro" id="IPR019491">
    <property type="entry name" value="Lipoate_protein_ligase_C"/>
</dbReference>
<dbReference type="InterPro" id="IPR004562">
    <property type="entry name" value="LipoylTrfase_LipoateP_Ligase"/>
</dbReference>
<dbReference type="NCBIfam" id="TIGR00545">
    <property type="entry name" value="lipoyltrans"/>
    <property type="match status" value="1"/>
</dbReference>
<dbReference type="PANTHER" id="PTHR12561">
    <property type="entry name" value="LIPOATE-PROTEIN LIGASE"/>
    <property type="match status" value="1"/>
</dbReference>
<dbReference type="PANTHER" id="PTHR12561:SF3">
    <property type="entry name" value="LIPOYLTRANSFERASE 1, MITOCHONDRIAL"/>
    <property type="match status" value="1"/>
</dbReference>
<dbReference type="Pfam" id="PF10437">
    <property type="entry name" value="Lip_prot_lig_C"/>
    <property type="match status" value="1"/>
</dbReference>
<dbReference type="Pfam" id="PF21948">
    <property type="entry name" value="LplA-B_cat"/>
    <property type="match status" value="1"/>
</dbReference>
<dbReference type="SUPFAM" id="SSF55681">
    <property type="entry name" value="Class II aaRS and biotin synthetases"/>
    <property type="match status" value="1"/>
</dbReference>
<dbReference type="SUPFAM" id="SSF82649">
    <property type="entry name" value="SufE/NifU"/>
    <property type="match status" value="1"/>
</dbReference>
<dbReference type="PROSITE" id="PS51733">
    <property type="entry name" value="BPL_LPL_CATALYTIC"/>
    <property type="match status" value="1"/>
</dbReference>
<reference key="1">
    <citation type="journal article" date="2001" name="Nature">
        <title>Genome sequence of enterohaemorrhagic Escherichia coli O157:H7.</title>
        <authorList>
            <person name="Perna N.T."/>
            <person name="Plunkett G. III"/>
            <person name="Burland V."/>
            <person name="Mau B."/>
            <person name="Glasner J.D."/>
            <person name="Rose D.J."/>
            <person name="Mayhew G.F."/>
            <person name="Evans P.S."/>
            <person name="Gregor J."/>
            <person name="Kirkpatrick H.A."/>
            <person name="Posfai G."/>
            <person name="Hackett J."/>
            <person name="Klink S."/>
            <person name="Boutin A."/>
            <person name="Shao Y."/>
            <person name="Miller L."/>
            <person name="Grotbeck E.J."/>
            <person name="Davis N.W."/>
            <person name="Lim A."/>
            <person name="Dimalanta E.T."/>
            <person name="Potamousis K."/>
            <person name="Apodaca J."/>
            <person name="Anantharaman T.S."/>
            <person name="Lin J."/>
            <person name="Yen G."/>
            <person name="Schwartz D.C."/>
            <person name="Welch R.A."/>
            <person name="Blattner F.R."/>
        </authorList>
    </citation>
    <scope>NUCLEOTIDE SEQUENCE [LARGE SCALE GENOMIC DNA]</scope>
    <source>
        <strain>O157:H7 / EDL933 / ATCC 700927 / EHEC</strain>
    </source>
</reference>
<reference key="2">
    <citation type="journal article" date="2001" name="DNA Res.">
        <title>Complete genome sequence of enterohemorrhagic Escherichia coli O157:H7 and genomic comparison with a laboratory strain K-12.</title>
        <authorList>
            <person name="Hayashi T."/>
            <person name="Makino K."/>
            <person name="Ohnishi M."/>
            <person name="Kurokawa K."/>
            <person name="Ishii K."/>
            <person name="Yokoyama K."/>
            <person name="Han C.-G."/>
            <person name="Ohtsubo E."/>
            <person name="Nakayama K."/>
            <person name="Murata T."/>
            <person name="Tanaka M."/>
            <person name="Tobe T."/>
            <person name="Iida T."/>
            <person name="Takami H."/>
            <person name="Honda T."/>
            <person name="Sasakawa C."/>
            <person name="Ogasawara N."/>
            <person name="Yasunaga T."/>
            <person name="Kuhara S."/>
            <person name="Shiba T."/>
            <person name="Hattori M."/>
            <person name="Shinagawa H."/>
        </authorList>
    </citation>
    <scope>NUCLEOTIDE SEQUENCE [LARGE SCALE GENOMIC DNA]</scope>
    <source>
        <strain>O157:H7 / Sakai / RIMD 0509952 / EHEC</strain>
    </source>
</reference>
<feature type="initiator methionine" description="Removed" evidence="1">
    <location>
        <position position="1"/>
    </location>
</feature>
<feature type="chain" id="PRO_0000209565" description="Lipoate-protein ligase A">
    <location>
        <begin position="2"/>
        <end position="338"/>
    </location>
</feature>
<feature type="domain" description="BPL/LPL catalytic" evidence="3">
    <location>
        <begin position="29"/>
        <end position="216"/>
    </location>
</feature>
<feature type="binding site" evidence="2">
    <location>
        <position position="71"/>
    </location>
    <ligand>
        <name>ATP</name>
        <dbReference type="ChEBI" id="CHEBI:30616"/>
    </ligand>
</feature>
<feature type="binding site" evidence="2">
    <location>
        <begin position="76"/>
        <end position="79"/>
    </location>
    <ligand>
        <name>ATP</name>
        <dbReference type="ChEBI" id="CHEBI:30616"/>
    </ligand>
</feature>
<feature type="binding site" evidence="2">
    <location>
        <position position="134"/>
    </location>
    <ligand>
        <name>(R)-lipoate</name>
        <dbReference type="ChEBI" id="CHEBI:83088"/>
    </ligand>
</feature>
<feature type="binding site" evidence="2">
    <location>
        <position position="134"/>
    </location>
    <ligand>
        <name>ATP</name>
        <dbReference type="ChEBI" id="CHEBI:30616"/>
    </ligand>
</feature>
<evidence type="ECO:0000250" key="1"/>
<evidence type="ECO:0000255" key="2">
    <source>
        <dbReference type="HAMAP-Rule" id="MF_01602"/>
    </source>
</evidence>
<evidence type="ECO:0000255" key="3">
    <source>
        <dbReference type="PROSITE-ProRule" id="PRU01067"/>
    </source>
</evidence>
<evidence type="ECO:0000305" key="4"/>